<protein>
    <recommendedName>
        <fullName>Cytochrome c oxidase subunit 1</fullName>
        <ecNumber>7.1.1.9</ecNumber>
    </recommendedName>
    <alternativeName>
        <fullName>Cytochrome c oxidase polypeptide I</fullName>
    </alternativeName>
</protein>
<proteinExistence type="inferred from homology"/>
<organism>
    <name type="scientific">Oenothera berteroana</name>
    <name type="common">Bertero's evening primrose</name>
    <dbReference type="NCBI Taxonomy" id="3950"/>
    <lineage>
        <taxon>Eukaryota</taxon>
        <taxon>Viridiplantae</taxon>
        <taxon>Streptophyta</taxon>
        <taxon>Embryophyta</taxon>
        <taxon>Tracheophyta</taxon>
        <taxon>Spermatophyta</taxon>
        <taxon>Magnoliopsida</taxon>
        <taxon>eudicotyledons</taxon>
        <taxon>Gunneridae</taxon>
        <taxon>Pentapetalae</taxon>
        <taxon>rosids</taxon>
        <taxon>malvids</taxon>
        <taxon>Myrtales</taxon>
        <taxon>Onagraceae</taxon>
        <taxon>Onagroideae</taxon>
        <taxon>Onagreae</taxon>
        <taxon>Oenothera</taxon>
    </lineage>
</organism>
<gene>
    <name type="primary">COX1</name>
    <name type="synonym">COI</name>
</gene>
<dbReference type="EC" id="7.1.1.9"/>
<dbReference type="EMBL" id="X05465">
    <property type="protein sequence ID" value="CAA29025.1"/>
    <property type="molecule type" value="Genomic_DNA"/>
</dbReference>
<dbReference type="PIR" id="A26170">
    <property type="entry name" value="ODOB1M"/>
</dbReference>
<dbReference type="SMR" id="P08743"/>
<dbReference type="UniPathway" id="UPA00705"/>
<dbReference type="GO" id="GO:0005743">
    <property type="term" value="C:mitochondrial inner membrane"/>
    <property type="evidence" value="ECO:0007669"/>
    <property type="project" value="UniProtKB-SubCell"/>
</dbReference>
<dbReference type="GO" id="GO:0045277">
    <property type="term" value="C:respiratory chain complex IV"/>
    <property type="evidence" value="ECO:0007669"/>
    <property type="project" value="InterPro"/>
</dbReference>
<dbReference type="GO" id="GO:0004129">
    <property type="term" value="F:cytochrome-c oxidase activity"/>
    <property type="evidence" value="ECO:0007669"/>
    <property type="project" value="UniProtKB-EC"/>
</dbReference>
<dbReference type="GO" id="GO:0020037">
    <property type="term" value="F:heme binding"/>
    <property type="evidence" value="ECO:0007669"/>
    <property type="project" value="InterPro"/>
</dbReference>
<dbReference type="GO" id="GO:0046872">
    <property type="term" value="F:metal ion binding"/>
    <property type="evidence" value="ECO:0007669"/>
    <property type="project" value="UniProtKB-KW"/>
</dbReference>
<dbReference type="GO" id="GO:0015990">
    <property type="term" value="P:electron transport coupled proton transport"/>
    <property type="evidence" value="ECO:0007669"/>
    <property type="project" value="TreeGrafter"/>
</dbReference>
<dbReference type="GO" id="GO:0006123">
    <property type="term" value="P:mitochondrial electron transport, cytochrome c to oxygen"/>
    <property type="evidence" value="ECO:0007669"/>
    <property type="project" value="TreeGrafter"/>
</dbReference>
<dbReference type="CDD" id="cd01663">
    <property type="entry name" value="Cyt_c_Oxidase_I"/>
    <property type="match status" value="1"/>
</dbReference>
<dbReference type="FunFam" id="1.20.210.10:FF:000001">
    <property type="entry name" value="Cytochrome c oxidase subunit 1"/>
    <property type="match status" value="1"/>
</dbReference>
<dbReference type="Gene3D" id="1.20.210.10">
    <property type="entry name" value="Cytochrome c oxidase-like, subunit I domain"/>
    <property type="match status" value="1"/>
</dbReference>
<dbReference type="InterPro" id="IPR023616">
    <property type="entry name" value="Cyt_c_oxase-like_su1_dom"/>
</dbReference>
<dbReference type="InterPro" id="IPR036927">
    <property type="entry name" value="Cyt_c_oxase-like_su1_sf"/>
</dbReference>
<dbReference type="InterPro" id="IPR000883">
    <property type="entry name" value="Cyt_C_Oxase_1"/>
</dbReference>
<dbReference type="InterPro" id="IPR033944">
    <property type="entry name" value="Cyt_c_oxase_su1_dom"/>
</dbReference>
<dbReference type="PANTHER" id="PTHR10422">
    <property type="entry name" value="CYTOCHROME C OXIDASE SUBUNIT 1"/>
    <property type="match status" value="1"/>
</dbReference>
<dbReference type="PANTHER" id="PTHR10422:SF18">
    <property type="entry name" value="CYTOCHROME C OXIDASE SUBUNIT 1"/>
    <property type="match status" value="1"/>
</dbReference>
<dbReference type="Pfam" id="PF00115">
    <property type="entry name" value="COX1"/>
    <property type="match status" value="1"/>
</dbReference>
<dbReference type="PRINTS" id="PR01165">
    <property type="entry name" value="CYCOXIDASEI"/>
</dbReference>
<dbReference type="SUPFAM" id="SSF81442">
    <property type="entry name" value="Cytochrome c oxidase subunit I-like"/>
    <property type="match status" value="1"/>
</dbReference>
<dbReference type="PROSITE" id="PS50855">
    <property type="entry name" value="COX1"/>
    <property type="match status" value="1"/>
</dbReference>
<sequence>MTNPVRWLFSTNHKDIGTLYFIFGAIAGVMGTCFSVLIRMELARPGDQILGGNHQLYNVLITAHAFLMIFFMVMPAMIGGSGNWSVPILIGAPDMAFPRLNNISFWLLPPSLLLLLSSALVEVGSGTGWTVYPPLSGITSHSGGAVDSAISSLHLSGVSSILGSINFITTISNMRGLGMTMHRSPLFVWSVLATAFPILLSLPVLAGAITMLLTDRNFNTTFSDPAGGGDPILYQHLFRFFGHPEVYILILPGSGIISHIVSTFSGKPVFGYLGMVYAMISIGVLGFLVWAHHMFTVGLDVDTRAYFTAATMIIAVPTGVKIFSWIATMWGGSIQYKTPMLFAVGSIFLFTVGGLAGIVPANSGLDIALHDTYYAGAHFHYVLSMGAVFALFAGFRYWVGKIFGRTYPETLGQIHFWITFFGVNPTFFPMHFLGLSGMPRPIPDYPESYAGWNALSSFGSYISVVGIRCFFVVVTITSSSGNNKRCAPSPWAVEKNSTTLEWMVQSPPAFHTFGELPATKETKSYVK</sequence>
<comment type="function">
    <text evidence="2">Component of the cytochrome c oxidase, the last enzyme in the mitochondrial electron transport chain which drives oxidative phosphorylation. The respiratory chain contains 3 multisubunit complexes succinate dehydrogenase (complex II, CII), ubiquinol-cytochrome c oxidoreductase (cytochrome b-c1 complex, complex III, CIII) and cytochrome c oxidase (complex IV, CIV), that cooperate to transfer electrons derived from NADH and succinate to molecular oxygen, creating an electrochemical gradient over the inner membrane that drives transmembrane transport and the ATP synthase. Cytochrome c oxidase is the component of the respiratory chain that catalyzes the reduction of oxygen to water. Electrons originating from reduced cytochrome c in the intermembrane space (IMS) are transferred via the dinuclear copper A center (CU(A)) of subunit 2 and heme A of subunit 1 to the active site in subunit 1, a binuclear center (BNC) formed by heme A3 and copper B (CU(B)). The BNC reduces molecular oxygen to 2 water molecules using 4 electrons from cytochrome c in the IMS and 4 protons from the mitochondrial matrix.</text>
</comment>
<comment type="catalytic activity">
    <reaction evidence="2">
        <text>4 Fe(II)-[cytochrome c] + O2 + 8 H(+)(in) = 4 Fe(III)-[cytochrome c] + 2 H2O + 4 H(+)(out)</text>
        <dbReference type="Rhea" id="RHEA:11436"/>
        <dbReference type="Rhea" id="RHEA-COMP:10350"/>
        <dbReference type="Rhea" id="RHEA-COMP:14399"/>
        <dbReference type="ChEBI" id="CHEBI:15377"/>
        <dbReference type="ChEBI" id="CHEBI:15378"/>
        <dbReference type="ChEBI" id="CHEBI:15379"/>
        <dbReference type="ChEBI" id="CHEBI:29033"/>
        <dbReference type="ChEBI" id="CHEBI:29034"/>
        <dbReference type="EC" id="7.1.1.9"/>
    </reaction>
    <physiologicalReaction direction="left-to-right" evidence="2">
        <dbReference type="Rhea" id="RHEA:11437"/>
    </physiologicalReaction>
</comment>
<comment type="cofactor">
    <cofactor evidence="2">
        <name>heme</name>
        <dbReference type="ChEBI" id="CHEBI:30413"/>
    </cofactor>
    <text evidence="2">Binds 2 heme A groups non-covalently per subunit.</text>
</comment>
<comment type="cofactor">
    <cofactor evidence="2">
        <name>Cu cation</name>
        <dbReference type="ChEBI" id="CHEBI:23378"/>
    </cofactor>
    <text evidence="2">Binds a copper B center.</text>
</comment>
<comment type="pathway">
    <text evidence="2">Energy metabolism; oxidative phosphorylation.</text>
</comment>
<comment type="subunit">
    <text evidence="2">Component of the cytochrome c oxidase (complex IV, CIV), a multisubunit enzyme composed of a catalytic core of 3 subunits and several supernumerary subunits. The complex exists as a monomer or a dimer and forms supercomplexes (SCs) in the inner mitochondrial membrane with ubiquinol-cytochrome c oxidoreductase (cytochrome b-c1 complex, complex III, CIII).</text>
</comment>
<comment type="subcellular location">
    <subcellularLocation>
        <location evidence="2">Mitochondrion inner membrane</location>
        <topology evidence="2">Multi-pass membrane protein</topology>
    </subcellularLocation>
</comment>
<comment type="similarity">
    <text evidence="4">Belongs to the heme-copper respiratory oxidase family.</text>
</comment>
<name>COX1_OENBE</name>
<reference key="1">
    <citation type="journal article" date="1987" name="EMBO J.">
        <title>The cytochrome oxidase subunit I and subunit III genes in Oenothera mitochondria are transcribed from identical promoter sequences.</title>
        <authorList>
            <person name="Hiesel R."/>
            <person name="Schobel W."/>
            <person name="Schuster W."/>
            <person name="Brennicke A."/>
        </authorList>
    </citation>
    <scope>NUCLEOTIDE SEQUENCE [GENOMIC DNA]</scope>
    <source>
        <strain>cv. Munzia</strain>
    </source>
</reference>
<keyword id="KW-0106">Calcium</keyword>
<keyword id="KW-0186">Copper</keyword>
<keyword id="KW-0249">Electron transport</keyword>
<keyword id="KW-0349">Heme</keyword>
<keyword id="KW-0408">Iron</keyword>
<keyword id="KW-0460">Magnesium</keyword>
<keyword id="KW-0472">Membrane</keyword>
<keyword id="KW-0479">Metal-binding</keyword>
<keyword id="KW-0496">Mitochondrion</keyword>
<keyword id="KW-0999">Mitochondrion inner membrane</keyword>
<keyword id="KW-0679">Respiratory chain</keyword>
<keyword id="KW-1278">Translocase</keyword>
<keyword id="KW-0812">Transmembrane</keyword>
<keyword id="KW-1133">Transmembrane helix</keyword>
<keyword id="KW-0813">Transport</keyword>
<evidence type="ECO:0000250" key="1">
    <source>
        <dbReference type="UniProtKB" id="P00396"/>
    </source>
</evidence>
<evidence type="ECO:0000250" key="2">
    <source>
        <dbReference type="UniProtKB" id="P00401"/>
    </source>
</evidence>
<evidence type="ECO:0000255" key="3"/>
<evidence type="ECO:0000305" key="4"/>
<feature type="chain" id="PRO_0000183369" description="Cytochrome c oxidase subunit 1">
    <location>
        <begin position="1"/>
        <end position="527"/>
    </location>
</feature>
<feature type="transmembrane region" description="Helical" evidence="3">
    <location>
        <begin position="18"/>
        <end position="38"/>
    </location>
</feature>
<feature type="transmembrane region" description="Helical" evidence="3">
    <location>
        <begin position="59"/>
        <end position="79"/>
    </location>
</feature>
<feature type="transmembrane region" description="Helical" evidence="3">
    <location>
        <begin position="103"/>
        <end position="123"/>
    </location>
</feature>
<feature type="transmembrane region" description="Helical" evidence="3">
    <location>
        <begin position="149"/>
        <end position="169"/>
    </location>
</feature>
<feature type="transmembrane region" description="Helical" evidence="3">
    <location>
        <begin position="186"/>
        <end position="206"/>
    </location>
</feature>
<feature type="transmembrane region" description="Helical" evidence="3">
    <location>
        <begin position="246"/>
        <end position="266"/>
    </location>
</feature>
<feature type="transmembrane region" description="Helical" evidence="3">
    <location>
        <begin position="269"/>
        <end position="289"/>
    </location>
</feature>
<feature type="transmembrane region" description="Helical" evidence="3">
    <location>
        <begin position="312"/>
        <end position="332"/>
    </location>
</feature>
<feature type="transmembrane region" description="Helical" evidence="3">
    <location>
        <begin position="339"/>
        <end position="359"/>
    </location>
</feature>
<feature type="transmembrane region" description="Helical" evidence="3">
    <location>
        <begin position="375"/>
        <end position="395"/>
    </location>
</feature>
<feature type="transmembrane region" description="Helical" evidence="3">
    <location>
        <begin position="414"/>
        <end position="434"/>
    </location>
</feature>
<feature type="transmembrane region" description="Helical" evidence="3">
    <location>
        <begin position="454"/>
        <end position="474"/>
    </location>
</feature>
<feature type="binding site" evidence="2">
    <location>
        <position position="41"/>
    </location>
    <ligand>
        <name>Ca(2+)</name>
        <dbReference type="ChEBI" id="CHEBI:29108"/>
    </ligand>
</feature>
<feature type="binding site" evidence="2">
    <location>
        <position position="46"/>
    </location>
    <ligand>
        <name>Ca(2+)</name>
        <dbReference type="ChEBI" id="CHEBI:29108"/>
    </ligand>
</feature>
<feature type="binding site" description="axial binding residue" evidence="2">
    <location>
        <position position="64"/>
    </location>
    <ligand>
        <name>Fe(II)-heme a</name>
        <dbReference type="ChEBI" id="CHEBI:61715"/>
        <note>low-spin</note>
    </ligand>
    <ligandPart>
        <name>Fe</name>
        <dbReference type="ChEBI" id="CHEBI:18248"/>
    </ligandPart>
</feature>
<feature type="binding site" evidence="2">
    <location>
        <position position="243"/>
    </location>
    <ligand>
        <name>Cu cation</name>
        <dbReference type="ChEBI" id="CHEBI:23378"/>
        <label>B</label>
    </ligand>
</feature>
<feature type="binding site" evidence="1">
    <location>
        <position position="247"/>
    </location>
    <ligand>
        <name>O2</name>
        <dbReference type="ChEBI" id="CHEBI:15379"/>
    </ligand>
</feature>
<feature type="binding site" evidence="2">
    <location>
        <position position="292"/>
    </location>
    <ligand>
        <name>Cu cation</name>
        <dbReference type="ChEBI" id="CHEBI:23378"/>
        <label>B</label>
    </ligand>
</feature>
<feature type="binding site" evidence="2">
    <location>
        <position position="293"/>
    </location>
    <ligand>
        <name>Cu cation</name>
        <dbReference type="ChEBI" id="CHEBI:23378"/>
        <label>B</label>
    </ligand>
</feature>
<feature type="binding site" evidence="2">
    <location>
        <position position="370"/>
    </location>
    <ligand>
        <name>Mg(2+)</name>
        <dbReference type="ChEBI" id="CHEBI:18420"/>
        <note>ligand shared with subunit 2</note>
    </ligand>
</feature>
<feature type="binding site" evidence="2">
    <location>
        <position position="371"/>
    </location>
    <ligand>
        <name>Mg(2+)</name>
        <dbReference type="ChEBI" id="CHEBI:18420"/>
        <note>ligand shared with subunit 2</note>
    </ligand>
</feature>
<feature type="binding site" description="axial binding residue" evidence="2">
    <location>
        <position position="378"/>
    </location>
    <ligand>
        <name>heme a3</name>
        <dbReference type="ChEBI" id="CHEBI:83282"/>
        <note>high-spin</note>
    </ligand>
    <ligandPart>
        <name>Fe</name>
        <dbReference type="ChEBI" id="CHEBI:18248"/>
    </ligandPart>
</feature>
<feature type="binding site" description="axial binding residue" evidence="2">
    <location>
        <position position="380"/>
    </location>
    <ligand>
        <name>Fe(II)-heme a</name>
        <dbReference type="ChEBI" id="CHEBI:61715"/>
        <note>low-spin</note>
    </ligand>
    <ligandPart>
        <name>Fe</name>
        <dbReference type="ChEBI" id="CHEBI:18248"/>
    </ligandPart>
</feature>
<feature type="binding site" evidence="2">
    <location>
        <position position="443"/>
    </location>
    <ligand>
        <name>Ca(2+)</name>
        <dbReference type="ChEBI" id="CHEBI:29108"/>
    </ligand>
</feature>
<feature type="cross-link" description="1'-histidyl-3'-tyrosine (His-Tyr)" evidence="2">
    <location>
        <begin position="243"/>
        <end position="247"/>
    </location>
</feature>
<geneLocation type="mitochondrion"/>
<accession>P08743</accession>